<reference key="1">
    <citation type="journal article" date="2006" name="Proc. Natl. Acad. Sci. U.S.A.">
        <title>Genome reduction in Leptospira borgpetersenii reflects limited transmission potential.</title>
        <authorList>
            <person name="Bulach D.M."/>
            <person name="Zuerner R.L."/>
            <person name="Wilson P."/>
            <person name="Seemann T."/>
            <person name="McGrath A."/>
            <person name="Cullen P.A."/>
            <person name="Davis J."/>
            <person name="Johnson M."/>
            <person name="Kuczek E."/>
            <person name="Alt D.P."/>
            <person name="Peterson-Burch B."/>
            <person name="Coppel R.L."/>
            <person name="Rood J.I."/>
            <person name="Davies J.K."/>
            <person name="Adler B."/>
        </authorList>
    </citation>
    <scope>NUCLEOTIDE SEQUENCE [LARGE SCALE GENOMIC DNA]</scope>
    <source>
        <strain>JB197</strain>
    </source>
</reference>
<dbReference type="EC" id="2.1.1.-" evidence="1"/>
<dbReference type="EMBL" id="CP000350">
    <property type="protein sequence ID" value="ABJ76712.1"/>
    <property type="molecule type" value="Genomic_DNA"/>
</dbReference>
<dbReference type="RefSeq" id="WP_002725156.1">
    <property type="nucleotide sequence ID" value="NC_008510.1"/>
</dbReference>
<dbReference type="SMR" id="Q04QV8"/>
<dbReference type="KEGG" id="lbj:LBJ_2231"/>
<dbReference type="HOGENOM" id="CLU_049382_0_2_12"/>
<dbReference type="Proteomes" id="UP000000656">
    <property type="component" value="Chromosome 1"/>
</dbReference>
<dbReference type="GO" id="GO:0005737">
    <property type="term" value="C:cytoplasm"/>
    <property type="evidence" value="ECO:0007669"/>
    <property type="project" value="UniProtKB-SubCell"/>
</dbReference>
<dbReference type="GO" id="GO:0016279">
    <property type="term" value="F:protein-lysine N-methyltransferase activity"/>
    <property type="evidence" value="ECO:0007669"/>
    <property type="project" value="RHEA"/>
</dbReference>
<dbReference type="GO" id="GO:0032259">
    <property type="term" value="P:methylation"/>
    <property type="evidence" value="ECO:0007669"/>
    <property type="project" value="UniProtKB-KW"/>
</dbReference>
<dbReference type="CDD" id="cd02440">
    <property type="entry name" value="AdoMet_MTases"/>
    <property type="match status" value="1"/>
</dbReference>
<dbReference type="Gene3D" id="3.40.50.150">
    <property type="entry name" value="Vaccinia Virus protein VP39"/>
    <property type="match status" value="1"/>
</dbReference>
<dbReference type="HAMAP" id="MF_00735">
    <property type="entry name" value="Methyltr_PrmA"/>
    <property type="match status" value="1"/>
</dbReference>
<dbReference type="InterPro" id="IPR050078">
    <property type="entry name" value="Ribosomal_L11_MeTrfase_PrmA"/>
</dbReference>
<dbReference type="InterPro" id="IPR004498">
    <property type="entry name" value="Ribosomal_PrmA_MeTrfase"/>
</dbReference>
<dbReference type="InterPro" id="IPR029063">
    <property type="entry name" value="SAM-dependent_MTases_sf"/>
</dbReference>
<dbReference type="PANTHER" id="PTHR43648">
    <property type="entry name" value="ELECTRON TRANSFER FLAVOPROTEIN BETA SUBUNIT LYSINE METHYLTRANSFERASE"/>
    <property type="match status" value="1"/>
</dbReference>
<dbReference type="PANTHER" id="PTHR43648:SF1">
    <property type="entry name" value="ELECTRON TRANSFER FLAVOPROTEIN BETA SUBUNIT LYSINE METHYLTRANSFERASE"/>
    <property type="match status" value="1"/>
</dbReference>
<dbReference type="Pfam" id="PF06325">
    <property type="entry name" value="PrmA"/>
    <property type="match status" value="1"/>
</dbReference>
<dbReference type="PIRSF" id="PIRSF000401">
    <property type="entry name" value="RPL11_MTase"/>
    <property type="match status" value="1"/>
</dbReference>
<dbReference type="SUPFAM" id="SSF53335">
    <property type="entry name" value="S-adenosyl-L-methionine-dependent methyltransferases"/>
    <property type="match status" value="1"/>
</dbReference>
<gene>
    <name evidence="1" type="primary">prmA</name>
    <name type="ordered locus">LBJ_2231</name>
</gene>
<evidence type="ECO:0000255" key="1">
    <source>
        <dbReference type="HAMAP-Rule" id="MF_00735"/>
    </source>
</evidence>
<sequence length="300" mass="33743">MKYREIILNIPKEIAEDFTTFLDEIGVAGYYEILFDREVPRAPHEEIISDDTKFRVYLAQEDNENETKILIYLKANAGEVFFSESRWIETKEYEEAYKEFYKPFIVGSYRVIPTWEKDTALGTTPEGIFPLFINPGLAFGTGHHETTRLVLGRMGNLSLSGKKVVDVGTGSGILSVAAAKSGASPILAVDVDPNSVRSASFNRDENDISSEVLAVEEGGFDHEKIQGQTWDLLIANITFAVLKANIQKIVSIKTDHFLFSGVITERLEEFLELLKNEVGGEGVFFQEDTGWELIEWKRKG</sequence>
<proteinExistence type="inferred from homology"/>
<comment type="function">
    <text evidence="1">Methylates ribosomal protein L11.</text>
</comment>
<comment type="catalytic activity">
    <reaction evidence="1">
        <text>L-lysyl-[protein] + 3 S-adenosyl-L-methionine = N(6),N(6),N(6)-trimethyl-L-lysyl-[protein] + 3 S-adenosyl-L-homocysteine + 3 H(+)</text>
        <dbReference type="Rhea" id="RHEA:54192"/>
        <dbReference type="Rhea" id="RHEA-COMP:9752"/>
        <dbReference type="Rhea" id="RHEA-COMP:13826"/>
        <dbReference type="ChEBI" id="CHEBI:15378"/>
        <dbReference type="ChEBI" id="CHEBI:29969"/>
        <dbReference type="ChEBI" id="CHEBI:57856"/>
        <dbReference type="ChEBI" id="CHEBI:59789"/>
        <dbReference type="ChEBI" id="CHEBI:61961"/>
    </reaction>
</comment>
<comment type="subcellular location">
    <subcellularLocation>
        <location evidence="1">Cytoplasm</location>
    </subcellularLocation>
</comment>
<comment type="similarity">
    <text evidence="1">Belongs to the methyltransferase superfamily. PrmA family.</text>
</comment>
<accession>Q04QV8</accession>
<keyword id="KW-0963">Cytoplasm</keyword>
<keyword id="KW-0489">Methyltransferase</keyword>
<keyword id="KW-0949">S-adenosyl-L-methionine</keyword>
<keyword id="KW-0808">Transferase</keyword>
<protein>
    <recommendedName>
        <fullName evidence="1">Ribosomal protein L11 methyltransferase</fullName>
        <shortName evidence="1">L11 Mtase</shortName>
        <ecNumber evidence="1">2.1.1.-</ecNumber>
    </recommendedName>
</protein>
<organism>
    <name type="scientific">Leptospira borgpetersenii serovar Hardjo-bovis (strain JB197)</name>
    <dbReference type="NCBI Taxonomy" id="355277"/>
    <lineage>
        <taxon>Bacteria</taxon>
        <taxon>Pseudomonadati</taxon>
        <taxon>Spirochaetota</taxon>
        <taxon>Spirochaetia</taxon>
        <taxon>Leptospirales</taxon>
        <taxon>Leptospiraceae</taxon>
        <taxon>Leptospira</taxon>
    </lineage>
</organism>
<feature type="chain" id="PRO_1000046042" description="Ribosomal protein L11 methyltransferase">
    <location>
        <begin position="1"/>
        <end position="300"/>
    </location>
</feature>
<feature type="binding site" evidence="1">
    <location>
        <position position="147"/>
    </location>
    <ligand>
        <name>S-adenosyl-L-methionine</name>
        <dbReference type="ChEBI" id="CHEBI:59789"/>
    </ligand>
</feature>
<feature type="binding site" evidence="1">
    <location>
        <position position="168"/>
    </location>
    <ligand>
        <name>S-adenosyl-L-methionine</name>
        <dbReference type="ChEBI" id="CHEBI:59789"/>
    </ligand>
</feature>
<feature type="binding site" evidence="1">
    <location>
        <position position="190"/>
    </location>
    <ligand>
        <name>S-adenosyl-L-methionine</name>
        <dbReference type="ChEBI" id="CHEBI:59789"/>
    </ligand>
</feature>
<feature type="binding site" evidence="1">
    <location>
        <position position="236"/>
    </location>
    <ligand>
        <name>S-adenosyl-L-methionine</name>
        <dbReference type="ChEBI" id="CHEBI:59789"/>
    </ligand>
</feature>
<name>PRMA_LEPBJ</name>